<gene>
    <name type="ORF">DDB_G0276327</name>
</gene>
<accession>Q86JD9</accession>
<accession>Q551U2</accession>
<dbReference type="EMBL" id="AAFI02000014">
    <property type="protein sequence ID" value="EAL69310.1"/>
    <property type="molecule type" value="Genomic_DNA"/>
</dbReference>
<dbReference type="RefSeq" id="XP_643235.1">
    <property type="nucleotide sequence ID" value="XM_638143.1"/>
</dbReference>
<dbReference type="GlyGen" id="Q86JD9">
    <property type="glycosylation" value="1 site"/>
</dbReference>
<dbReference type="PaxDb" id="44689-DDB0217784"/>
<dbReference type="EnsemblProtists" id="EAL69310">
    <property type="protein sequence ID" value="EAL69310"/>
    <property type="gene ID" value="DDB_G0276327"/>
</dbReference>
<dbReference type="GeneID" id="8620439"/>
<dbReference type="KEGG" id="ddi:DDB_G0276327"/>
<dbReference type="dictyBase" id="DDB_G0276327"/>
<dbReference type="VEuPathDB" id="AmoebaDB:DDB_G0276327"/>
<dbReference type="HOGENOM" id="CLU_1996864_0_0_1"/>
<dbReference type="InParanoid" id="Q86JD9"/>
<dbReference type="PRO" id="PR:Q86JD9"/>
<dbReference type="Proteomes" id="UP000002195">
    <property type="component" value="Chromosome 2"/>
</dbReference>
<name>Y7784_DICDI</name>
<organism>
    <name type="scientific">Dictyostelium discoideum</name>
    <name type="common">Social amoeba</name>
    <dbReference type="NCBI Taxonomy" id="44689"/>
    <lineage>
        <taxon>Eukaryota</taxon>
        <taxon>Amoebozoa</taxon>
        <taxon>Evosea</taxon>
        <taxon>Eumycetozoa</taxon>
        <taxon>Dictyostelia</taxon>
        <taxon>Dictyosteliales</taxon>
        <taxon>Dictyosteliaceae</taxon>
        <taxon>Dictyostelium</taxon>
    </lineage>
</organism>
<keyword id="KW-1185">Reference proteome</keyword>
<reference key="1">
    <citation type="journal article" date="2002" name="Nature">
        <title>Sequence and analysis of chromosome 2 of Dictyostelium discoideum.</title>
        <authorList>
            <person name="Gloeckner G."/>
            <person name="Eichinger L."/>
            <person name="Szafranski K."/>
            <person name="Pachebat J.A."/>
            <person name="Bankier A.T."/>
            <person name="Dear P.H."/>
            <person name="Lehmann R."/>
            <person name="Baumgart C."/>
            <person name="Parra G."/>
            <person name="Abril J.F."/>
            <person name="Guigo R."/>
            <person name="Kumpf K."/>
            <person name="Tunggal B."/>
            <person name="Cox E.C."/>
            <person name="Quail M.A."/>
            <person name="Platzer M."/>
            <person name="Rosenthal A."/>
            <person name="Noegel A.A."/>
        </authorList>
    </citation>
    <scope>NUCLEOTIDE SEQUENCE [LARGE SCALE GENOMIC DNA]</scope>
    <source>
        <strain>AX4</strain>
    </source>
</reference>
<reference key="2">
    <citation type="journal article" date="2005" name="Nature">
        <title>The genome of the social amoeba Dictyostelium discoideum.</title>
        <authorList>
            <person name="Eichinger L."/>
            <person name="Pachebat J.A."/>
            <person name="Gloeckner G."/>
            <person name="Rajandream M.A."/>
            <person name="Sucgang R."/>
            <person name="Berriman M."/>
            <person name="Song J."/>
            <person name="Olsen R."/>
            <person name="Szafranski K."/>
            <person name="Xu Q."/>
            <person name="Tunggal B."/>
            <person name="Kummerfeld S."/>
            <person name="Madera M."/>
            <person name="Konfortov B.A."/>
            <person name="Rivero F."/>
            <person name="Bankier A.T."/>
            <person name="Lehmann R."/>
            <person name="Hamlin N."/>
            <person name="Davies R."/>
            <person name="Gaudet P."/>
            <person name="Fey P."/>
            <person name="Pilcher K."/>
            <person name="Chen G."/>
            <person name="Saunders D."/>
            <person name="Sodergren E.J."/>
            <person name="Davis P."/>
            <person name="Kerhornou A."/>
            <person name="Nie X."/>
            <person name="Hall N."/>
            <person name="Anjard C."/>
            <person name="Hemphill L."/>
            <person name="Bason N."/>
            <person name="Farbrother P."/>
            <person name="Desany B."/>
            <person name="Just E."/>
            <person name="Morio T."/>
            <person name="Rost R."/>
            <person name="Churcher C.M."/>
            <person name="Cooper J."/>
            <person name="Haydock S."/>
            <person name="van Driessche N."/>
            <person name="Cronin A."/>
            <person name="Goodhead I."/>
            <person name="Muzny D.M."/>
            <person name="Mourier T."/>
            <person name="Pain A."/>
            <person name="Lu M."/>
            <person name="Harper D."/>
            <person name="Lindsay R."/>
            <person name="Hauser H."/>
            <person name="James K.D."/>
            <person name="Quiles M."/>
            <person name="Madan Babu M."/>
            <person name="Saito T."/>
            <person name="Buchrieser C."/>
            <person name="Wardroper A."/>
            <person name="Felder M."/>
            <person name="Thangavelu M."/>
            <person name="Johnson D."/>
            <person name="Knights A."/>
            <person name="Loulseged H."/>
            <person name="Mungall K.L."/>
            <person name="Oliver K."/>
            <person name="Price C."/>
            <person name="Quail M.A."/>
            <person name="Urushihara H."/>
            <person name="Hernandez J."/>
            <person name="Rabbinowitsch E."/>
            <person name="Steffen D."/>
            <person name="Sanders M."/>
            <person name="Ma J."/>
            <person name="Kohara Y."/>
            <person name="Sharp S."/>
            <person name="Simmonds M.N."/>
            <person name="Spiegler S."/>
            <person name="Tivey A."/>
            <person name="Sugano S."/>
            <person name="White B."/>
            <person name="Walker D."/>
            <person name="Woodward J.R."/>
            <person name="Winckler T."/>
            <person name="Tanaka Y."/>
            <person name="Shaulsky G."/>
            <person name="Schleicher M."/>
            <person name="Weinstock G.M."/>
            <person name="Rosenthal A."/>
            <person name="Cox E.C."/>
            <person name="Chisholm R.L."/>
            <person name="Gibbs R.A."/>
            <person name="Loomis W.F."/>
            <person name="Platzer M."/>
            <person name="Kay R.R."/>
            <person name="Williams J.G."/>
            <person name="Dear P.H."/>
            <person name="Noegel A.A."/>
            <person name="Barrell B.G."/>
            <person name="Kuspa A."/>
        </authorList>
    </citation>
    <scope>NUCLEOTIDE SEQUENCE [LARGE SCALE GENOMIC DNA]</scope>
    <source>
        <strain>AX4</strain>
    </source>
</reference>
<sequence>MDQFKVPPPTYAPVAGQTIYGAPSYNNYYMRTPQVSTAPMIYPTPMMAPPIMTPPIMTQPIMTPPMMYPPIIPSQPFMGPSMVSPIMSPPMIPSQPFMGPSMVSPGYGVTPNLNVPFSTNVKYYD</sequence>
<proteinExistence type="predicted"/>
<protein>
    <recommendedName>
        <fullName>Putative uncharacterized protein DDB_G0276327</fullName>
    </recommendedName>
</protein>
<feature type="chain" id="PRO_0000348143" description="Putative uncharacterized protein DDB_G0276327">
    <location>
        <begin position="1"/>
        <end position="125"/>
    </location>
</feature>